<reference key="1">
    <citation type="journal article" date="2001" name="Nature">
        <title>Complete genome sequence of Salmonella enterica serovar Typhimurium LT2.</title>
        <authorList>
            <person name="McClelland M."/>
            <person name="Sanderson K.E."/>
            <person name="Spieth J."/>
            <person name="Clifton S.W."/>
            <person name="Latreille P."/>
            <person name="Courtney L."/>
            <person name="Porwollik S."/>
            <person name="Ali J."/>
            <person name="Dante M."/>
            <person name="Du F."/>
            <person name="Hou S."/>
            <person name="Layman D."/>
            <person name="Leonard S."/>
            <person name="Nguyen C."/>
            <person name="Scott K."/>
            <person name="Holmes A."/>
            <person name="Grewal N."/>
            <person name="Mulvaney E."/>
            <person name="Ryan E."/>
            <person name="Sun H."/>
            <person name="Florea L."/>
            <person name="Miller W."/>
            <person name="Stoneking T."/>
            <person name="Nhan M."/>
            <person name="Waterston R."/>
            <person name="Wilson R.K."/>
        </authorList>
    </citation>
    <scope>NUCLEOTIDE SEQUENCE [LARGE SCALE GENOMIC DNA]</scope>
    <source>
        <strain>LT2 / SGSC1412 / ATCC 700720</strain>
    </source>
</reference>
<comment type="similarity">
    <text evidence="2">Belongs to the bacterial ribosomal protein bL27 family.</text>
</comment>
<evidence type="ECO:0000250" key="1"/>
<evidence type="ECO:0000255" key="2">
    <source>
        <dbReference type="HAMAP-Rule" id="MF_00539"/>
    </source>
</evidence>
<evidence type="ECO:0000256" key="3">
    <source>
        <dbReference type="SAM" id="MobiDB-lite"/>
    </source>
</evidence>
<evidence type="ECO:0000305" key="4"/>
<sequence>MAHKKAGGSTRNGRDSEAKRLGVKRFGGEAVLAGSIIVRQRGTKFHAGTNVGCGRDHTLFAKADGKVKFEVKGPKNRKYISIVAE</sequence>
<keyword id="KW-1185">Reference proteome</keyword>
<keyword id="KW-0687">Ribonucleoprotein</keyword>
<keyword id="KW-0689">Ribosomal protein</keyword>
<gene>
    <name evidence="2" type="primary">rpmA</name>
    <name type="ordered locus">STM3303</name>
</gene>
<name>RL27_SALTY</name>
<proteinExistence type="inferred from homology"/>
<accession>P66131</accession>
<accession>Q8XGK4</accession>
<protein>
    <recommendedName>
        <fullName evidence="2">Large ribosomal subunit protein bL27</fullName>
    </recommendedName>
    <alternativeName>
        <fullName evidence="4">50S ribosomal protein L27</fullName>
    </alternativeName>
</protein>
<feature type="initiator methionine" description="Removed" evidence="1">
    <location>
        <position position="1"/>
    </location>
</feature>
<feature type="chain" id="PRO_0000181160" description="Large ribosomal subunit protein bL27">
    <location>
        <begin position="2"/>
        <end position="85"/>
    </location>
</feature>
<feature type="region of interest" description="Disordered" evidence="3">
    <location>
        <begin position="1"/>
        <end position="20"/>
    </location>
</feature>
<dbReference type="EMBL" id="AE006468">
    <property type="protein sequence ID" value="AAL22172.1"/>
    <property type="molecule type" value="Genomic_DNA"/>
</dbReference>
<dbReference type="RefSeq" id="NP_462213.1">
    <property type="nucleotide sequence ID" value="NC_003197.2"/>
</dbReference>
<dbReference type="RefSeq" id="WP_000940593.1">
    <property type="nucleotide sequence ID" value="NC_003197.2"/>
</dbReference>
<dbReference type="SMR" id="P66131"/>
<dbReference type="STRING" id="99287.STM3303"/>
<dbReference type="PaxDb" id="99287-STM3303"/>
<dbReference type="GeneID" id="1254826"/>
<dbReference type="GeneID" id="66757642"/>
<dbReference type="KEGG" id="stm:STM3303"/>
<dbReference type="PATRIC" id="fig|99287.12.peg.3504"/>
<dbReference type="HOGENOM" id="CLU_095424_4_1_6"/>
<dbReference type="OMA" id="GKDHTLH"/>
<dbReference type="PhylomeDB" id="P66131"/>
<dbReference type="BioCyc" id="SENT99287:STM3303-MONOMER"/>
<dbReference type="Proteomes" id="UP000001014">
    <property type="component" value="Chromosome"/>
</dbReference>
<dbReference type="GO" id="GO:0022625">
    <property type="term" value="C:cytosolic large ribosomal subunit"/>
    <property type="evidence" value="ECO:0000318"/>
    <property type="project" value="GO_Central"/>
</dbReference>
<dbReference type="GO" id="GO:0003735">
    <property type="term" value="F:structural constituent of ribosome"/>
    <property type="evidence" value="ECO:0000318"/>
    <property type="project" value="GO_Central"/>
</dbReference>
<dbReference type="GO" id="GO:0006412">
    <property type="term" value="P:translation"/>
    <property type="evidence" value="ECO:0007669"/>
    <property type="project" value="UniProtKB-UniRule"/>
</dbReference>
<dbReference type="FunFam" id="2.40.50.100:FF:000001">
    <property type="entry name" value="50S ribosomal protein L27"/>
    <property type="match status" value="1"/>
</dbReference>
<dbReference type="Gene3D" id="2.40.50.100">
    <property type="match status" value="1"/>
</dbReference>
<dbReference type="HAMAP" id="MF_00539">
    <property type="entry name" value="Ribosomal_bL27"/>
    <property type="match status" value="1"/>
</dbReference>
<dbReference type="InterPro" id="IPR001684">
    <property type="entry name" value="Ribosomal_bL27"/>
</dbReference>
<dbReference type="InterPro" id="IPR018261">
    <property type="entry name" value="Ribosomal_bL27_CS"/>
</dbReference>
<dbReference type="NCBIfam" id="TIGR00062">
    <property type="entry name" value="L27"/>
    <property type="match status" value="1"/>
</dbReference>
<dbReference type="PANTHER" id="PTHR15893:SF0">
    <property type="entry name" value="LARGE RIBOSOMAL SUBUNIT PROTEIN BL27M"/>
    <property type="match status" value="1"/>
</dbReference>
<dbReference type="PANTHER" id="PTHR15893">
    <property type="entry name" value="RIBOSOMAL PROTEIN L27"/>
    <property type="match status" value="1"/>
</dbReference>
<dbReference type="Pfam" id="PF01016">
    <property type="entry name" value="Ribosomal_L27"/>
    <property type="match status" value="1"/>
</dbReference>
<dbReference type="PRINTS" id="PR00063">
    <property type="entry name" value="RIBOSOMALL27"/>
</dbReference>
<dbReference type="SUPFAM" id="SSF110324">
    <property type="entry name" value="Ribosomal L27 protein-like"/>
    <property type="match status" value="1"/>
</dbReference>
<dbReference type="PROSITE" id="PS00831">
    <property type="entry name" value="RIBOSOMAL_L27"/>
    <property type="match status" value="1"/>
</dbReference>
<organism>
    <name type="scientific">Salmonella typhimurium (strain LT2 / SGSC1412 / ATCC 700720)</name>
    <dbReference type="NCBI Taxonomy" id="99287"/>
    <lineage>
        <taxon>Bacteria</taxon>
        <taxon>Pseudomonadati</taxon>
        <taxon>Pseudomonadota</taxon>
        <taxon>Gammaproteobacteria</taxon>
        <taxon>Enterobacterales</taxon>
        <taxon>Enterobacteriaceae</taxon>
        <taxon>Salmonella</taxon>
    </lineage>
</organism>